<name>RS4_SPHAL</name>
<keyword id="KW-1185">Reference proteome</keyword>
<keyword id="KW-0687">Ribonucleoprotein</keyword>
<keyword id="KW-0689">Ribosomal protein</keyword>
<keyword id="KW-0694">RNA-binding</keyword>
<keyword id="KW-0699">rRNA-binding</keyword>
<reference key="1">
    <citation type="journal article" date="2009" name="Proc. Natl. Acad. Sci. U.S.A.">
        <title>The genomic basis of trophic strategy in marine bacteria.</title>
        <authorList>
            <person name="Lauro F.M."/>
            <person name="McDougald D."/>
            <person name="Thomas T."/>
            <person name="Williams T.J."/>
            <person name="Egan S."/>
            <person name="Rice S."/>
            <person name="DeMaere M.Z."/>
            <person name="Ting L."/>
            <person name="Ertan H."/>
            <person name="Johnson J."/>
            <person name="Ferriera S."/>
            <person name="Lapidus A."/>
            <person name="Anderson I."/>
            <person name="Kyrpides N."/>
            <person name="Munk A.C."/>
            <person name="Detter C."/>
            <person name="Han C.S."/>
            <person name="Brown M.V."/>
            <person name="Robb F.T."/>
            <person name="Kjelleberg S."/>
            <person name="Cavicchioli R."/>
        </authorList>
    </citation>
    <scope>NUCLEOTIDE SEQUENCE [LARGE SCALE GENOMIC DNA]</scope>
    <source>
        <strain>DSM 13593 / LMG 18877 / RB2256</strain>
    </source>
</reference>
<protein>
    <recommendedName>
        <fullName evidence="1">Small ribosomal subunit protein uS4</fullName>
    </recommendedName>
    <alternativeName>
        <fullName evidence="3">30S ribosomal protein S4</fullName>
    </alternativeName>
</protein>
<dbReference type="EMBL" id="CP000356">
    <property type="protein sequence ID" value="ABF52506.1"/>
    <property type="molecule type" value="Genomic_DNA"/>
</dbReference>
<dbReference type="RefSeq" id="WP_011541096.1">
    <property type="nucleotide sequence ID" value="NC_008048.1"/>
</dbReference>
<dbReference type="SMR" id="Q1GV16"/>
<dbReference type="STRING" id="317655.Sala_0786"/>
<dbReference type="KEGG" id="sal:Sala_0786"/>
<dbReference type="eggNOG" id="COG0522">
    <property type="taxonomic scope" value="Bacteria"/>
</dbReference>
<dbReference type="HOGENOM" id="CLU_092403_0_0_5"/>
<dbReference type="OrthoDB" id="9803672at2"/>
<dbReference type="Proteomes" id="UP000006578">
    <property type="component" value="Chromosome"/>
</dbReference>
<dbReference type="GO" id="GO:0015935">
    <property type="term" value="C:small ribosomal subunit"/>
    <property type="evidence" value="ECO:0007669"/>
    <property type="project" value="InterPro"/>
</dbReference>
<dbReference type="GO" id="GO:0019843">
    <property type="term" value="F:rRNA binding"/>
    <property type="evidence" value="ECO:0007669"/>
    <property type="project" value="UniProtKB-UniRule"/>
</dbReference>
<dbReference type="GO" id="GO:0003735">
    <property type="term" value="F:structural constituent of ribosome"/>
    <property type="evidence" value="ECO:0007669"/>
    <property type="project" value="InterPro"/>
</dbReference>
<dbReference type="GO" id="GO:0042274">
    <property type="term" value="P:ribosomal small subunit biogenesis"/>
    <property type="evidence" value="ECO:0007669"/>
    <property type="project" value="TreeGrafter"/>
</dbReference>
<dbReference type="GO" id="GO:0006412">
    <property type="term" value="P:translation"/>
    <property type="evidence" value="ECO:0007669"/>
    <property type="project" value="UniProtKB-UniRule"/>
</dbReference>
<dbReference type="CDD" id="cd00165">
    <property type="entry name" value="S4"/>
    <property type="match status" value="1"/>
</dbReference>
<dbReference type="FunFam" id="3.10.290.10:FF:000001">
    <property type="entry name" value="30S ribosomal protein S4"/>
    <property type="match status" value="1"/>
</dbReference>
<dbReference type="Gene3D" id="1.10.1050.10">
    <property type="entry name" value="Ribosomal Protein S4 Delta 41, Chain A, domain 1"/>
    <property type="match status" value="1"/>
</dbReference>
<dbReference type="Gene3D" id="3.10.290.10">
    <property type="entry name" value="RNA-binding S4 domain"/>
    <property type="match status" value="1"/>
</dbReference>
<dbReference type="HAMAP" id="MF_01306_B">
    <property type="entry name" value="Ribosomal_uS4_B"/>
    <property type="match status" value="1"/>
</dbReference>
<dbReference type="InterPro" id="IPR022801">
    <property type="entry name" value="Ribosomal_uS4"/>
</dbReference>
<dbReference type="InterPro" id="IPR005709">
    <property type="entry name" value="Ribosomal_uS4_bac-type"/>
</dbReference>
<dbReference type="InterPro" id="IPR018079">
    <property type="entry name" value="Ribosomal_uS4_CS"/>
</dbReference>
<dbReference type="InterPro" id="IPR001912">
    <property type="entry name" value="Ribosomal_uS4_N"/>
</dbReference>
<dbReference type="InterPro" id="IPR002942">
    <property type="entry name" value="S4_RNA-bd"/>
</dbReference>
<dbReference type="InterPro" id="IPR036986">
    <property type="entry name" value="S4_RNA-bd_sf"/>
</dbReference>
<dbReference type="NCBIfam" id="NF003717">
    <property type="entry name" value="PRK05327.1"/>
    <property type="match status" value="1"/>
</dbReference>
<dbReference type="NCBIfam" id="TIGR01017">
    <property type="entry name" value="rpsD_bact"/>
    <property type="match status" value="1"/>
</dbReference>
<dbReference type="PANTHER" id="PTHR11831">
    <property type="entry name" value="30S 40S RIBOSOMAL PROTEIN"/>
    <property type="match status" value="1"/>
</dbReference>
<dbReference type="PANTHER" id="PTHR11831:SF4">
    <property type="entry name" value="SMALL RIBOSOMAL SUBUNIT PROTEIN US4M"/>
    <property type="match status" value="1"/>
</dbReference>
<dbReference type="Pfam" id="PF00163">
    <property type="entry name" value="Ribosomal_S4"/>
    <property type="match status" value="1"/>
</dbReference>
<dbReference type="Pfam" id="PF01479">
    <property type="entry name" value="S4"/>
    <property type="match status" value="1"/>
</dbReference>
<dbReference type="SMART" id="SM01390">
    <property type="entry name" value="Ribosomal_S4"/>
    <property type="match status" value="1"/>
</dbReference>
<dbReference type="SMART" id="SM00363">
    <property type="entry name" value="S4"/>
    <property type="match status" value="1"/>
</dbReference>
<dbReference type="SUPFAM" id="SSF55174">
    <property type="entry name" value="Alpha-L RNA-binding motif"/>
    <property type="match status" value="1"/>
</dbReference>
<dbReference type="PROSITE" id="PS00632">
    <property type="entry name" value="RIBOSOMAL_S4"/>
    <property type="match status" value="1"/>
</dbReference>
<dbReference type="PROSITE" id="PS50889">
    <property type="entry name" value="S4"/>
    <property type="match status" value="1"/>
</dbReference>
<comment type="function">
    <text evidence="1">One of the primary rRNA binding proteins, it binds directly to 16S rRNA where it nucleates assembly of the body of the 30S subunit.</text>
</comment>
<comment type="function">
    <text evidence="1">With S5 and S12 plays an important role in translational accuracy.</text>
</comment>
<comment type="subunit">
    <text evidence="1">Part of the 30S ribosomal subunit. Contacts protein S5. The interaction surface between S4 and S5 is involved in control of translational fidelity.</text>
</comment>
<comment type="similarity">
    <text evidence="1">Belongs to the universal ribosomal protein uS4 family.</text>
</comment>
<accession>Q1GV16</accession>
<evidence type="ECO:0000255" key="1">
    <source>
        <dbReference type="HAMAP-Rule" id="MF_01306"/>
    </source>
</evidence>
<evidence type="ECO:0000256" key="2">
    <source>
        <dbReference type="SAM" id="MobiDB-lite"/>
    </source>
</evidence>
<evidence type="ECO:0000305" key="3"/>
<sequence>MSKRQSAKYKLDRRMGENIWGRPKSPVNRREYGPGQHGQRRKGKMSDFGIQLRAKQKLKGYYGDITEKQFKKNYIEASRMKGDTGQNLIGLLERRLDAVVYRAKFTPTIFSARQLVSHGHVYVNGVKCNIASRLVKPGDEITLGKKAQEMALVAEAQSLPERDLPEYLAVDGTKATYVRVPTLDEVPYPVKMEPNLVVEFYSR</sequence>
<feature type="chain" id="PRO_0000293374" description="Small ribosomal subunit protein uS4">
    <location>
        <begin position="1"/>
        <end position="203"/>
    </location>
</feature>
<feature type="domain" description="S4 RNA-binding" evidence="1">
    <location>
        <begin position="94"/>
        <end position="157"/>
    </location>
</feature>
<feature type="region of interest" description="Disordered" evidence="2">
    <location>
        <begin position="1"/>
        <end position="46"/>
    </location>
</feature>
<organism>
    <name type="scientific">Sphingopyxis alaskensis (strain DSM 13593 / LMG 18877 / RB2256)</name>
    <name type="common">Sphingomonas alaskensis</name>
    <dbReference type="NCBI Taxonomy" id="317655"/>
    <lineage>
        <taxon>Bacteria</taxon>
        <taxon>Pseudomonadati</taxon>
        <taxon>Pseudomonadota</taxon>
        <taxon>Alphaproteobacteria</taxon>
        <taxon>Sphingomonadales</taxon>
        <taxon>Sphingomonadaceae</taxon>
        <taxon>Sphingopyxis</taxon>
    </lineage>
</organism>
<gene>
    <name evidence="1" type="primary">rpsD</name>
    <name type="ordered locus">Sala_0786</name>
</gene>
<proteinExistence type="inferred from homology"/>